<gene>
    <name type="primary">glgB1</name>
    <name type="synonym">glgBI</name>
    <name type="ordered locus">SCO5440</name>
    <name type="ORF">SC6A11.16c</name>
</gene>
<dbReference type="EC" id="2.4.1.18"/>
<dbReference type="EMBL" id="X83397">
    <property type="protein sequence ID" value="CAA58314.1"/>
    <property type="molecule type" value="Genomic_DNA"/>
</dbReference>
<dbReference type="EMBL" id="AL939123">
    <property type="protein sequence ID" value="CAB72416.1"/>
    <property type="molecule type" value="Genomic_DNA"/>
</dbReference>
<dbReference type="EMBL" id="AJ001205">
    <property type="protein sequence ID" value="CAA04603.1"/>
    <property type="molecule type" value="Genomic_DNA"/>
</dbReference>
<dbReference type="PIR" id="S70079">
    <property type="entry name" value="S70079"/>
</dbReference>
<dbReference type="RefSeq" id="NP_629578.1">
    <property type="nucleotide sequence ID" value="NC_003888.3"/>
</dbReference>
<dbReference type="SMR" id="Q59833"/>
<dbReference type="FunCoup" id="Q59833">
    <property type="interactions" value="402"/>
</dbReference>
<dbReference type="STRING" id="100226.gene:17763092"/>
<dbReference type="CAZy" id="CBM48">
    <property type="family name" value="Carbohydrate-Binding Module Family 48"/>
</dbReference>
<dbReference type="CAZy" id="GH13">
    <property type="family name" value="Glycoside Hydrolase Family 13"/>
</dbReference>
<dbReference type="PaxDb" id="100226-SCO5440"/>
<dbReference type="KEGG" id="sco:SCO5440"/>
<dbReference type="PATRIC" id="fig|100226.15.peg.5521"/>
<dbReference type="eggNOG" id="COG0296">
    <property type="taxonomic scope" value="Bacteria"/>
</dbReference>
<dbReference type="HOGENOM" id="CLU_004245_3_2_11"/>
<dbReference type="InParanoid" id="Q59833"/>
<dbReference type="OrthoDB" id="9800174at2"/>
<dbReference type="PhylomeDB" id="Q59833"/>
<dbReference type="UniPathway" id="UPA00164"/>
<dbReference type="Proteomes" id="UP000001973">
    <property type="component" value="Chromosome"/>
</dbReference>
<dbReference type="GO" id="GO:0005737">
    <property type="term" value="C:cytoplasm"/>
    <property type="evidence" value="ECO:0000318"/>
    <property type="project" value="GO_Central"/>
</dbReference>
<dbReference type="GO" id="GO:0005829">
    <property type="term" value="C:cytosol"/>
    <property type="evidence" value="ECO:0000318"/>
    <property type="project" value="GO_Central"/>
</dbReference>
<dbReference type="GO" id="GO:0003844">
    <property type="term" value="F:1,4-alpha-glucan branching enzyme activity"/>
    <property type="evidence" value="ECO:0000318"/>
    <property type="project" value="GO_Central"/>
</dbReference>
<dbReference type="GO" id="GO:0043169">
    <property type="term" value="F:cation binding"/>
    <property type="evidence" value="ECO:0007669"/>
    <property type="project" value="InterPro"/>
</dbReference>
<dbReference type="GO" id="GO:0004553">
    <property type="term" value="F:hydrolase activity, hydrolyzing O-glycosyl compounds"/>
    <property type="evidence" value="ECO:0007669"/>
    <property type="project" value="InterPro"/>
</dbReference>
<dbReference type="GO" id="GO:0005978">
    <property type="term" value="P:glycogen biosynthetic process"/>
    <property type="evidence" value="ECO:0000318"/>
    <property type="project" value="GO_Central"/>
</dbReference>
<dbReference type="CDD" id="cd11322">
    <property type="entry name" value="AmyAc_Glg_BE"/>
    <property type="match status" value="1"/>
</dbReference>
<dbReference type="CDD" id="cd02855">
    <property type="entry name" value="E_set_GBE_prok_N"/>
    <property type="match status" value="1"/>
</dbReference>
<dbReference type="FunFam" id="2.60.40.10:FF:000169">
    <property type="entry name" value="1,4-alpha-glucan branching enzyme GlgB"/>
    <property type="match status" value="1"/>
</dbReference>
<dbReference type="FunFam" id="2.60.40.10:FF:002204">
    <property type="entry name" value="1,4-alpha-glucan branching enzyme GlgB"/>
    <property type="match status" value="1"/>
</dbReference>
<dbReference type="FunFam" id="3.20.20.80:FF:000003">
    <property type="entry name" value="1,4-alpha-glucan branching enzyme GlgB"/>
    <property type="match status" value="1"/>
</dbReference>
<dbReference type="Gene3D" id="3.20.20.80">
    <property type="entry name" value="Glycosidases"/>
    <property type="match status" value="1"/>
</dbReference>
<dbReference type="Gene3D" id="2.60.40.1180">
    <property type="entry name" value="Golgi alpha-mannosidase II"/>
    <property type="match status" value="1"/>
</dbReference>
<dbReference type="Gene3D" id="2.60.40.10">
    <property type="entry name" value="Immunoglobulins"/>
    <property type="match status" value="2"/>
</dbReference>
<dbReference type="HAMAP" id="MF_00685">
    <property type="entry name" value="GlgB"/>
    <property type="match status" value="1"/>
</dbReference>
<dbReference type="InterPro" id="IPR006048">
    <property type="entry name" value="A-amylase/branching_C"/>
</dbReference>
<dbReference type="InterPro" id="IPR037439">
    <property type="entry name" value="Branching_enzy"/>
</dbReference>
<dbReference type="InterPro" id="IPR006407">
    <property type="entry name" value="GlgB"/>
</dbReference>
<dbReference type="InterPro" id="IPR054169">
    <property type="entry name" value="GlgB_N"/>
</dbReference>
<dbReference type="InterPro" id="IPR044143">
    <property type="entry name" value="GlgB_N_E_set_prok"/>
</dbReference>
<dbReference type="InterPro" id="IPR006047">
    <property type="entry name" value="Glyco_hydro_13_cat_dom"/>
</dbReference>
<dbReference type="InterPro" id="IPR004193">
    <property type="entry name" value="Glyco_hydro_13_N"/>
</dbReference>
<dbReference type="InterPro" id="IPR013780">
    <property type="entry name" value="Glyco_hydro_b"/>
</dbReference>
<dbReference type="InterPro" id="IPR017853">
    <property type="entry name" value="Glycoside_hydrolase_SF"/>
</dbReference>
<dbReference type="InterPro" id="IPR013783">
    <property type="entry name" value="Ig-like_fold"/>
</dbReference>
<dbReference type="InterPro" id="IPR014756">
    <property type="entry name" value="Ig_E-set"/>
</dbReference>
<dbReference type="NCBIfam" id="TIGR01515">
    <property type="entry name" value="branching_enzym"/>
    <property type="match status" value="1"/>
</dbReference>
<dbReference type="NCBIfam" id="NF003811">
    <property type="entry name" value="PRK05402.1"/>
    <property type="match status" value="1"/>
</dbReference>
<dbReference type="NCBIfam" id="NF008967">
    <property type="entry name" value="PRK12313.1"/>
    <property type="match status" value="1"/>
</dbReference>
<dbReference type="PANTHER" id="PTHR43651">
    <property type="entry name" value="1,4-ALPHA-GLUCAN-BRANCHING ENZYME"/>
    <property type="match status" value="1"/>
</dbReference>
<dbReference type="PANTHER" id="PTHR43651:SF3">
    <property type="entry name" value="1,4-ALPHA-GLUCAN-BRANCHING ENZYME"/>
    <property type="match status" value="1"/>
</dbReference>
<dbReference type="Pfam" id="PF00128">
    <property type="entry name" value="Alpha-amylase"/>
    <property type="match status" value="1"/>
</dbReference>
<dbReference type="Pfam" id="PF02806">
    <property type="entry name" value="Alpha-amylase_C"/>
    <property type="match status" value="1"/>
</dbReference>
<dbReference type="Pfam" id="PF02922">
    <property type="entry name" value="CBM_48"/>
    <property type="match status" value="1"/>
</dbReference>
<dbReference type="Pfam" id="PF22019">
    <property type="entry name" value="GlgB_N"/>
    <property type="match status" value="1"/>
</dbReference>
<dbReference type="PIRSF" id="PIRSF000463">
    <property type="entry name" value="GlgB"/>
    <property type="match status" value="1"/>
</dbReference>
<dbReference type="SMART" id="SM00642">
    <property type="entry name" value="Aamy"/>
    <property type="match status" value="1"/>
</dbReference>
<dbReference type="SUPFAM" id="SSF51445">
    <property type="entry name" value="(Trans)glycosidases"/>
    <property type="match status" value="1"/>
</dbReference>
<dbReference type="SUPFAM" id="SSF81296">
    <property type="entry name" value="E set domains"/>
    <property type="match status" value="1"/>
</dbReference>
<dbReference type="SUPFAM" id="SSF51011">
    <property type="entry name" value="Glycosyl hydrolase domain"/>
    <property type="match status" value="1"/>
</dbReference>
<name>GLGB1_STRCO</name>
<feature type="chain" id="PRO_0000188749" description="1,4-alpha-glucan branching enzyme GlgB 1">
    <location>
        <begin position="1"/>
        <end position="774"/>
    </location>
</feature>
<feature type="region of interest" description="Disordered" evidence="2">
    <location>
        <begin position="1"/>
        <end position="66"/>
    </location>
</feature>
<feature type="region of interest" description="Disordered" evidence="2">
    <location>
        <begin position="748"/>
        <end position="774"/>
    </location>
</feature>
<feature type="compositionally biased region" description="Basic residues" evidence="2">
    <location>
        <begin position="29"/>
        <end position="40"/>
    </location>
</feature>
<feature type="compositionally biased region" description="Low complexity" evidence="2">
    <location>
        <begin position="41"/>
        <end position="55"/>
    </location>
</feature>
<feature type="active site" description="Nucleophile" evidence="1">
    <location>
        <position position="457"/>
    </location>
</feature>
<feature type="active site" description="Proton donor" evidence="1">
    <location>
        <position position="510"/>
    </location>
</feature>
<feature type="sequence conflict" description="In Ref. 1; CAA58314/CAA04603." evidence="3" ref="1">
    <original>T</original>
    <variation>R</variation>
    <location>
        <position position="146"/>
    </location>
</feature>
<feature type="sequence conflict" description="In Ref. 1; CAA58314." evidence="3" ref="1">
    <original>GTAARRASG</original>
    <variation>WHGRPASIRLTLPPLATVWLRPA</variation>
    <location>
        <begin position="766"/>
        <end position="774"/>
    </location>
</feature>
<reference key="1">
    <citation type="journal article" date="1995" name="Mol. Microbiol.">
        <title>Tissue-specific glycogen branching isoenzymes in a multicellular prokaryote, Streptomyces coelicolor A3(2).</title>
        <authorList>
            <person name="Bruton C.J."/>
            <person name="Plaskitt K.A."/>
            <person name="Chater K.F."/>
        </authorList>
    </citation>
    <scope>NUCLEOTIDE SEQUENCE [GENOMIC DNA]</scope>
    <source>
        <strain>A3(2) / NRRL B-16638</strain>
    </source>
</reference>
<reference key="2">
    <citation type="journal article" date="2002" name="Nature">
        <title>Complete genome sequence of the model actinomycete Streptomyces coelicolor A3(2).</title>
        <authorList>
            <person name="Bentley S.D."/>
            <person name="Chater K.F."/>
            <person name="Cerdeno-Tarraga A.-M."/>
            <person name="Challis G.L."/>
            <person name="Thomson N.R."/>
            <person name="James K.D."/>
            <person name="Harris D.E."/>
            <person name="Quail M.A."/>
            <person name="Kieser H."/>
            <person name="Harper D."/>
            <person name="Bateman A."/>
            <person name="Brown S."/>
            <person name="Chandra G."/>
            <person name="Chen C.W."/>
            <person name="Collins M."/>
            <person name="Cronin A."/>
            <person name="Fraser A."/>
            <person name="Goble A."/>
            <person name="Hidalgo J."/>
            <person name="Hornsby T."/>
            <person name="Howarth S."/>
            <person name="Huang C.-H."/>
            <person name="Kieser T."/>
            <person name="Larke L."/>
            <person name="Murphy L.D."/>
            <person name="Oliver K."/>
            <person name="O'Neil S."/>
            <person name="Rabbinowitsch E."/>
            <person name="Rajandream M.A."/>
            <person name="Rutherford K.M."/>
            <person name="Rutter S."/>
            <person name="Seeger K."/>
            <person name="Saunders D."/>
            <person name="Sharp S."/>
            <person name="Squares R."/>
            <person name="Squares S."/>
            <person name="Taylor K."/>
            <person name="Warren T."/>
            <person name="Wietzorrek A."/>
            <person name="Woodward J.R."/>
            <person name="Barrell B.G."/>
            <person name="Parkhill J."/>
            <person name="Hopwood D.A."/>
        </authorList>
    </citation>
    <scope>NUCLEOTIDE SEQUENCE [LARGE SCALE GENOMIC DNA]</scope>
    <source>
        <strain>ATCC BAA-471 / A3(2) / M145</strain>
    </source>
</reference>
<reference key="3">
    <citation type="submission" date="1998-03" db="EMBL/GenBank/DDBJ databases">
        <title>Duplicated gene clusters reveal a possible 'carbon relay' during aerial mycelium development in Streptomyces coelicolor A3(2).</title>
        <authorList>
            <person name="Schneider D."/>
            <person name="Bruton C.J."/>
            <person name="Chater K.F."/>
        </authorList>
    </citation>
    <scope>NUCLEOTIDE SEQUENCE [GENOMIC DNA] OF 1-217</scope>
    <source>
        <strain>A3(2) / NRRL B-16638</strain>
    </source>
</reference>
<accession>Q59833</accession>
<accession>Q9L1K4</accession>
<evidence type="ECO:0000250" key="1"/>
<evidence type="ECO:0000256" key="2">
    <source>
        <dbReference type="SAM" id="MobiDB-lite"/>
    </source>
</evidence>
<evidence type="ECO:0000305" key="3"/>
<organism>
    <name type="scientific">Streptomyces coelicolor (strain ATCC BAA-471 / A3(2) / M145)</name>
    <dbReference type="NCBI Taxonomy" id="100226"/>
    <lineage>
        <taxon>Bacteria</taxon>
        <taxon>Bacillati</taxon>
        <taxon>Actinomycetota</taxon>
        <taxon>Actinomycetes</taxon>
        <taxon>Kitasatosporales</taxon>
        <taxon>Streptomycetaceae</taxon>
        <taxon>Streptomyces</taxon>
        <taxon>Streptomyces albidoflavus group</taxon>
    </lineage>
</organism>
<sequence>MTPRPSSSGPDPRKTTGKKPAGKTPTGKKPAKAAKKKAPRRTTASANASATTSVSGAEVAVSPAPDAADRERLLAGTHHDPHAVLGAHRVPGGVAFRVFRPYALAVTVLSGELRVGLHDDGDGFFSGLVPLKDVPAHRLLVAYEGTEQEVEDPYRFLPTLGELDLHLLGEGRHEQLWRALGAHPTTHEGVAGTRFAVWAPNARGVRVAGGFNFWDGTGHPMRSLGSTGVWELFLPGVGAGELYKFEITRPDGSRTFRADPLARRTEVPPATSSVVHASDYTWGDEEWLAHRADAPAHEAPMSVYEVHLPSWRPGLTYRQLAEQLPAYVADLGFTHVELMPVAEHPFGGSWGYQVTGFYAPTARLGDPDDFKYLVDRLHRAGIGVLMDWVPAHFPRDDWALAEFDGRPLYEHSDPLRAAHPDWGTLEFDFGRREVRNFLVANAVYWCEEFHIDGLRVDAVASMLYLDYSREPGEWEPNEHGGRENLDAVAFLQEMNATLYRRVPGVVTVAEESTAWDGVTRATHHEGPSGFGGLGFGLKWNMGWMHDSLDYMSHEPVHRKHHHGEMTFSMVYAYSENYVLPISHDEVVHGKRSLVSKMPGDWWQQRANERAYLGFMWAHPGKQLLFMGQEFAQGAEWSEAHGPDWWLLDPEYGASADHRGVRDLVRDLNTVYRATPALWRRDTHPSGFSWVVGDAAEDNVLAFLRLDADGTPLLAVSNFAPVVRSGYRLGVPDEVPAWHEVLNTDAARYGGGDVVNPDPVKPEPQGGTAARRASG</sequence>
<comment type="function">
    <text evidence="1">Catalyzes the formation of the alpha-1,6-glucosidic linkages in glycogen by scission of a 1,4-alpha-linked oligosaccharide from growing alpha-1,4-glucan chains and the subsequent attachment of the oligosaccharide to the alpha-1,6 position.</text>
</comment>
<comment type="catalytic activity">
    <reaction>
        <text>Transfers a segment of a (1-&gt;4)-alpha-D-glucan chain to a primary hydroxy group in a similar glucan chain.</text>
        <dbReference type="EC" id="2.4.1.18"/>
    </reaction>
</comment>
<comment type="pathway">
    <text>Glycan biosynthesis; glycogen biosynthesis.</text>
</comment>
<comment type="subunit">
    <text evidence="1">Monomer.</text>
</comment>
<comment type="similarity">
    <text evidence="3">Belongs to the glycosyl hydrolase 13 family. GlgB subfamily.</text>
</comment>
<proteinExistence type="inferred from homology"/>
<keyword id="KW-0119">Carbohydrate metabolism</keyword>
<keyword id="KW-0320">Glycogen biosynthesis</keyword>
<keyword id="KW-0321">Glycogen metabolism</keyword>
<keyword id="KW-0328">Glycosyltransferase</keyword>
<keyword id="KW-1185">Reference proteome</keyword>
<keyword id="KW-0808">Transferase</keyword>
<protein>
    <recommendedName>
        <fullName>1,4-alpha-glucan branching enzyme GlgB 1</fullName>
        <ecNumber>2.4.1.18</ecNumber>
    </recommendedName>
    <alternativeName>
        <fullName>1,4-alpha-D-glucan:1,4-alpha-D-glucan 6-glucosyl-transferase 1</fullName>
    </alternativeName>
    <alternativeName>
        <fullName>Alpha-(1-&gt;4)-glucan branching enzyme 1</fullName>
    </alternativeName>
    <alternativeName>
        <fullName>Glycogen branching enzyme 1</fullName>
        <shortName>BE 1</shortName>
    </alternativeName>
</protein>